<name>IMDH_MYCTO</name>
<protein>
    <recommendedName>
        <fullName evidence="1">Inosine-5'-monophosphate dehydrogenase</fullName>
        <shortName evidence="1">IMP dehydrogenase</shortName>
        <shortName evidence="1">IMPD</shortName>
        <shortName evidence="1">IMPDH</shortName>
        <ecNumber evidence="1">1.1.1.205</ecNumber>
    </recommendedName>
</protein>
<accession>P9WKI6</accession>
<accession>L0TCG3</accession>
<accession>P65167</accession>
<accession>Q50715</accession>
<comment type="function">
    <text evidence="1">Catalyzes the conversion of inosine 5'-phosphate (IMP) to xanthosine 5'-phosphate (XMP), the first committed and rate-limiting step in the de novo synthesis of guanine nucleotides, and therefore plays an important role in the regulation of cell growth.</text>
</comment>
<comment type="catalytic activity">
    <reaction evidence="1">
        <text>IMP + NAD(+) + H2O = XMP + NADH + H(+)</text>
        <dbReference type="Rhea" id="RHEA:11708"/>
        <dbReference type="ChEBI" id="CHEBI:15377"/>
        <dbReference type="ChEBI" id="CHEBI:15378"/>
        <dbReference type="ChEBI" id="CHEBI:57464"/>
        <dbReference type="ChEBI" id="CHEBI:57540"/>
        <dbReference type="ChEBI" id="CHEBI:57945"/>
        <dbReference type="ChEBI" id="CHEBI:58053"/>
        <dbReference type="EC" id="1.1.1.205"/>
    </reaction>
</comment>
<comment type="cofactor">
    <cofactor evidence="1">
        <name>K(+)</name>
        <dbReference type="ChEBI" id="CHEBI:29103"/>
    </cofactor>
</comment>
<comment type="pathway">
    <text evidence="1">Purine metabolism; XMP biosynthesis via de novo pathway; XMP from IMP: step 1/1.</text>
</comment>
<comment type="subunit">
    <text evidence="1">Homotetramer.</text>
</comment>
<comment type="similarity">
    <text evidence="1">Belongs to the IMPDH/GMPR family.</text>
</comment>
<keyword id="KW-0129">CBS domain</keyword>
<keyword id="KW-0332">GMP biosynthesis</keyword>
<keyword id="KW-0479">Metal-binding</keyword>
<keyword id="KW-0520">NAD</keyword>
<keyword id="KW-0560">Oxidoreductase</keyword>
<keyword id="KW-0630">Potassium</keyword>
<keyword id="KW-0658">Purine biosynthesis</keyword>
<keyword id="KW-1185">Reference proteome</keyword>
<keyword id="KW-0677">Repeat</keyword>
<dbReference type="EC" id="1.1.1.205" evidence="1"/>
<dbReference type="EMBL" id="AE000516">
    <property type="protein sequence ID" value="AAK47857.1"/>
    <property type="molecule type" value="Genomic_DNA"/>
</dbReference>
<dbReference type="PIR" id="H70736">
    <property type="entry name" value="H70736"/>
</dbReference>
<dbReference type="RefSeq" id="WP_003900682.1">
    <property type="nucleotide sequence ID" value="NZ_KK341227.1"/>
</dbReference>
<dbReference type="SMR" id="P9WKI6"/>
<dbReference type="GeneID" id="45427407"/>
<dbReference type="KEGG" id="mtc:MT3519"/>
<dbReference type="PATRIC" id="fig|83331.31.peg.3777"/>
<dbReference type="HOGENOM" id="CLU_022552_2_1_11"/>
<dbReference type="UniPathway" id="UPA00601">
    <property type="reaction ID" value="UER00295"/>
</dbReference>
<dbReference type="Proteomes" id="UP000001020">
    <property type="component" value="Chromosome"/>
</dbReference>
<dbReference type="GO" id="GO:0003938">
    <property type="term" value="F:IMP dehydrogenase activity"/>
    <property type="evidence" value="ECO:0007669"/>
    <property type="project" value="UniProtKB-UniRule"/>
</dbReference>
<dbReference type="GO" id="GO:0046872">
    <property type="term" value="F:metal ion binding"/>
    <property type="evidence" value="ECO:0007669"/>
    <property type="project" value="UniProtKB-UniRule"/>
</dbReference>
<dbReference type="GO" id="GO:0000166">
    <property type="term" value="F:nucleotide binding"/>
    <property type="evidence" value="ECO:0007669"/>
    <property type="project" value="UniProtKB-UniRule"/>
</dbReference>
<dbReference type="GO" id="GO:0006177">
    <property type="term" value="P:GMP biosynthetic process"/>
    <property type="evidence" value="ECO:0007669"/>
    <property type="project" value="UniProtKB-UniRule"/>
</dbReference>
<dbReference type="GO" id="GO:0006183">
    <property type="term" value="P:GTP biosynthetic process"/>
    <property type="evidence" value="ECO:0007669"/>
    <property type="project" value="TreeGrafter"/>
</dbReference>
<dbReference type="CDD" id="cd04601">
    <property type="entry name" value="CBS_pair_IMPDH"/>
    <property type="match status" value="1"/>
</dbReference>
<dbReference type="CDD" id="cd00381">
    <property type="entry name" value="IMPDH"/>
    <property type="match status" value="1"/>
</dbReference>
<dbReference type="FunFam" id="3.20.20.70:FF:000003">
    <property type="entry name" value="GMP reductase"/>
    <property type="match status" value="1"/>
</dbReference>
<dbReference type="Gene3D" id="3.20.20.70">
    <property type="entry name" value="Aldolase class I"/>
    <property type="match status" value="1"/>
</dbReference>
<dbReference type="HAMAP" id="MF_01964">
    <property type="entry name" value="IMPDH"/>
    <property type="match status" value="1"/>
</dbReference>
<dbReference type="InterPro" id="IPR013785">
    <property type="entry name" value="Aldolase_TIM"/>
</dbReference>
<dbReference type="InterPro" id="IPR000644">
    <property type="entry name" value="CBS_dom"/>
</dbReference>
<dbReference type="InterPro" id="IPR046342">
    <property type="entry name" value="CBS_dom_sf"/>
</dbReference>
<dbReference type="InterPro" id="IPR005990">
    <property type="entry name" value="IMP_DH"/>
</dbReference>
<dbReference type="InterPro" id="IPR015875">
    <property type="entry name" value="IMP_DH/GMP_Rdtase_CS"/>
</dbReference>
<dbReference type="InterPro" id="IPR001093">
    <property type="entry name" value="IMP_DH_GMPRt"/>
</dbReference>
<dbReference type="NCBIfam" id="TIGR01302">
    <property type="entry name" value="IMP_dehydrog"/>
    <property type="match status" value="1"/>
</dbReference>
<dbReference type="PANTHER" id="PTHR11911:SF111">
    <property type="entry name" value="INOSINE-5'-MONOPHOSPHATE DEHYDROGENASE"/>
    <property type="match status" value="1"/>
</dbReference>
<dbReference type="PANTHER" id="PTHR11911">
    <property type="entry name" value="INOSINE-5-MONOPHOSPHATE DEHYDROGENASE RELATED"/>
    <property type="match status" value="1"/>
</dbReference>
<dbReference type="Pfam" id="PF00571">
    <property type="entry name" value="CBS"/>
    <property type="match status" value="2"/>
</dbReference>
<dbReference type="Pfam" id="PF00478">
    <property type="entry name" value="IMPDH"/>
    <property type="match status" value="1"/>
</dbReference>
<dbReference type="PIRSF" id="PIRSF000130">
    <property type="entry name" value="IMPDH"/>
    <property type="match status" value="1"/>
</dbReference>
<dbReference type="SMART" id="SM00116">
    <property type="entry name" value="CBS"/>
    <property type="match status" value="2"/>
</dbReference>
<dbReference type="SMART" id="SM01240">
    <property type="entry name" value="IMPDH"/>
    <property type="match status" value="1"/>
</dbReference>
<dbReference type="SUPFAM" id="SSF54631">
    <property type="entry name" value="CBS-domain pair"/>
    <property type="match status" value="1"/>
</dbReference>
<dbReference type="SUPFAM" id="SSF51412">
    <property type="entry name" value="Inosine monophosphate dehydrogenase (IMPDH)"/>
    <property type="match status" value="1"/>
</dbReference>
<dbReference type="PROSITE" id="PS51371">
    <property type="entry name" value="CBS"/>
    <property type="match status" value="2"/>
</dbReference>
<dbReference type="PROSITE" id="PS00487">
    <property type="entry name" value="IMP_DH_GMP_RED"/>
    <property type="match status" value="1"/>
</dbReference>
<gene>
    <name evidence="1" type="primary">guaB</name>
    <name type="synonym">guaB2</name>
    <name type="ordered locus">MT3519</name>
</gene>
<reference key="1">
    <citation type="journal article" date="2002" name="J. Bacteriol.">
        <title>Whole-genome comparison of Mycobacterium tuberculosis clinical and laboratory strains.</title>
        <authorList>
            <person name="Fleischmann R.D."/>
            <person name="Alland D."/>
            <person name="Eisen J.A."/>
            <person name="Carpenter L."/>
            <person name="White O."/>
            <person name="Peterson J.D."/>
            <person name="DeBoy R.T."/>
            <person name="Dodson R.J."/>
            <person name="Gwinn M.L."/>
            <person name="Haft D.H."/>
            <person name="Hickey E.K."/>
            <person name="Kolonay J.F."/>
            <person name="Nelson W.C."/>
            <person name="Umayam L.A."/>
            <person name="Ermolaeva M.D."/>
            <person name="Salzberg S.L."/>
            <person name="Delcher A."/>
            <person name="Utterback T.R."/>
            <person name="Weidman J.F."/>
            <person name="Khouri H.M."/>
            <person name="Gill J."/>
            <person name="Mikula A."/>
            <person name="Bishai W."/>
            <person name="Jacobs W.R. Jr."/>
            <person name="Venter J.C."/>
            <person name="Fraser C.M."/>
        </authorList>
    </citation>
    <scope>NUCLEOTIDE SEQUENCE [LARGE SCALE GENOMIC DNA]</scope>
    <source>
        <strain>CDC 1551 / Oshkosh</strain>
    </source>
</reference>
<sequence length="529" mass="54867">MSRGMSGLEDSSDLVVSPYVRMGGLTTDPVPTGGDDPHKVAMLGLTFDDVLLLPAASDVVPATADTSSQLTKKIRLKVPLVSSAMDTVTESRMAIAMARAGGMGVLHRNLPVAEQAGQVEMVKRSEAGMVTDPVTCRPDNTLAQVDALCARFRISGLPVVDDDGALVGIITNRDMRFEVDQSKQVAEVMTKAPLITAQEGVSASAALGLLRRNKIEKLPVVDGRGRLTGLITVKDFVKTEQHPLATKDSDGRLLVGAAVGVGGDAWVRAMMLVDAGVDVLVVDTAHAHNRLVLDMVGKLKSEVGDRVEVVGGNVATRSAAAALVDAGADAVKVGVGPGSICTTRVVAGVGAPQITAILEAVAACRPAGVPVIADGGLQYSGDIAKALAAGASTAMLGSLLAGTAEAPGELIFVNGKQYKSYRGMGSLGAMRGRGGATSYSKDRYFADDALSEDKLVPEGIEGRVPFRGPLSSVIHQLTGGLRAAMGYTGSPTIEVLQQAQFVRITPAGLKESHPHDVAMTVEAPNYYAR</sequence>
<evidence type="ECO:0000255" key="1">
    <source>
        <dbReference type="HAMAP-Rule" id="MF_01964"/>
    </source>
</evidence>
<feature type="chain" id="PRO_0000427647" description="Inosine-5'-monophosphate dehydrogenase">
    <location>
        <begin position="1"/>
        <end position="529"/>
    </location>
</feature>
<feature type="domain" description="CBS 1" evidence="1">
    <location>
        <begin position="129"/>
        <end position="185"/>
    </location>
</feature>
<feature type="domain" description="CBS 2" evidence="1">
    <location>
        <begin position="189"/>
        <end position="246"/>
    </location>
</feature>
<feature type="active site" description="Thioimidate intermediate" evidence="1">
    <location>
        <position position="341"/>
    </location>
</feature>
<feature type="active site" description="Proton acceptor" evidence="1">
    <location>
        <position position="443"/>
    </location>
</feature>
<feature type="binding site" evidence="1">
    <location>
        <position position="283"/>
    </location>
    <ligand>
        <name>NAD(+)</name>
        <dbReference type="ChEBI" id="CHEBI:57540"/>
    </ligand>
</feature>
<feature type="binding site" evidence="1">
    <location>
        <begin position="334"/>
        <end position="336"/>
    </location>
    <ligand>
        <name>NAD(+)</name>
        <dbReference type="ChEBI" id="CHEBI:57540"/>
    </ligand>
</feature>
<feature type="binding site" description="in other chain" evidence="1">
    <location>
        <position position="336"/>
    </location>
    <ligand>
        <name>K(+)</name>
        <dbReference type="ChEBI" id="CHEBI:29103"/>
        <note>ligand shared between two tetrameric partners</note>
    </ligand>
</feature>
<feature type="binding site" description="in other chain" evidence="1">
    <location>
        <position position="338"/>
    </location>
    <ligand>
        <name>K(+)</name>
        <dbReference type="ChEBI" id="CHEBI:29103"/>
        <note>ligand shared between two tetrameric partners</note>
    </ligand>
</feature>
<feature type="binding site" evidence="1">
    <location>
        <position position="339"/>
    </location>
    <ligand>
        <name>IMP</name>
        <dbReference type="ChEBI" id="CHEBI:58053"/>
    </ligand>
</feature>
<feature type="binding site" description="in other chain" evidence="1">
    <location>
        <position position="341"/>
    </location>
    <ligand>
        <name>K(+)</name>
        <dbReference type="ChEBI" id="CHEBI:29103"/>
        <note>ligand shared between two tetrameric partners</note>
    </ligand>
</feature>
<feature type="binding site" evidence="1">
    <location>
        <begin position="374"/>
        <end position="376"/>
    </location>
    <ligand>
        <name>IMP</name>
        <dbReference type="ChEBI" id="CHEBI:58053"/>
    </ligand>
</feature>
<feature type="binding site" evidence="1">
    <location>
        <begin position="397"/>
        <end position="398"/>
    </location>
    <ligand>
        <name>IMP</name>
        <dbReference type="ChEBI" id="CHEBI:58053"/>
    </ligand>
</feature>
<feature type="binding site" evidence="1">
    <location>
        <begin position="421"/>
        <end position="425"/>
    </location>
    <ligand>
        <name>IMP</name>
        <dbReference type="ChEBI" id="CHEBI:58053"/>
    </ligand>
</feature>
<feature type="binding site" evidence="1">
    <location>
        <position position="458"/>
    </location>
    <ligand>
        <name>IMP</name>
        <dbReference type="ChEBI" id="CHEBI:58053"/>
    </ligand>
</feature>
<feature type="binding site" evidence="1">
    <location>
        <position position="511"/>
    </location>
    <ligand>
        <name>K(+)</name>
        <dbReference type="ChEBI" id="CHEBI:29103"/>
        <note>ligand shared between two tetrameric partners</note>
    </ligand>
</feature>
<feature type="binding site" evidence="1">
    <location>
        <position position="512"/>
    </location>
    <ligand>
        <name>K(+)</name>
        <dbReference type="ChEBI" id="CHEBI:29103"/>
        <note>ligand shared between two tetrameric partners</note>
    </ligand>
</feature>
<feature type="binding site" evidence="1">
    <location>
        <position position="513"/>
    </location>
    <ligand>
        <name>K(+)</name>
        <dbReference type="ChEBI" id="CHEBI:29103"/>
        <note>ligand shared between two tetrameric partners</note>
    </ligand>
</feature>
<proteinExistence type="inferred from homology"/>
<organism>
    <name type="scientific">Mycobacterium tuberculosis (strain CDC 1551 / Oshkosh)</name>
    <dbReference type="NCBI Taxonomy" id="83331"/>
    <lineage>
        <taxon>Bacteria</taxon>
        <taxon>Bacillati</taxon>
        <taxon>Actinomycetota</taxon>
        <taxon>Actinomycetes</taxon>
        <taxon>Mycobacteriales</taxon>
        <taxon>Mycobacteriaceae</taxon>
        <taxon>Mycobacterium</taxon>
        <taxon>Mycobacterium tuberculosis complex</taxon>
    </lineage>
</organism>